<keyword id="KW-1185">Reference proteome</keyword>
<keyword id="KW-0346">Stress response</keyword>
<evidence type="ECO:0000255" key="1">
    <source>
        <dbReference type="PROSITE-ProRule" id="PRU00285"/>
    </source>
</evidence>
<evidence type="ECO:0000269" key="2">
    <source>
    </source>
</evidence>
<evidence type="ECO:0000305" key="3"/>
<evidence type="ECO:0000312" key="4">
    <source>
        <dbReference type="WormBase" id="Y46H3A.3a"/>
    </source>
</evidence>
<gene>
    <name evidence="4" type="primary">hsp-16.2</name>
    <name evidence="4" type="synonym">hsp-16</name>
    <name evidence="4" type="synonym">hsp16-2</name>
    <name evidence="4" type="ORF">Y46H3A.3</name>
</gene>
<accession>P06582</accession>
<proteinExistence type="evidence at transcript level"/>
<comment type="induction">
    <text evidence="2">Induced by white light exposure.</text>
</comment>
<comment type="similarity">
    <text evidence="1">Belongs to the small heat shock protein (HSP20) family.</text>
</comment>
<reference key="1">
    <citation type="journal article" date="1986" name="J. Biol. Chem.">
        <title>Structure, expression, and evolution of a heat shock gene locus in Caenorhabditis elegans that is flanked by repetitive elements.</title>
        <authorList>
            <person name="Jones D."/>
            <person name="Russnak R.H."/>
            <person name="Kay R.J."/>
            <person name="Candido E.P.M."/>
        </authorList>
    </citation>
    <scope>NUCLEOTIDE SEQUENCE [GENOMIC DNA]</scope>
</reference>
<reference key="2">
    <citation type="journal article" date="1998" name="Science">
        <title>Genome sequence of the nematode C. elegans: a platform for investigating biology.</title>
        <authorList>
            <consortium name="The C. elegans sequencing consortium"/>
        </authorList>
    </citation>
    <scope>NUCLEOTIDE SEQUENCE [LARGE SCALE GENOMIC DNA]</scope>
    <source>
        <strain>Bristol N2</strain>
    </source>
</reference>
<reference key="3">
    <citation type="journal article" date="2018" name="Nat. Commun.">
        <title>Visible light reduces C. elegans longevity.</title>
        <authorList>
            <person name="De Magalhaes Filho C.D."/>
            <person name="Henriquez B."/>
            <person name="Seah N.E."/>
            <person name="Evans R.M."/>
            <person name="Lapierre L.R."/>
            <person name="Dillin A."/>
        </authorList>
    </citation>
    <scope>INDUCTION</scope>
</reference>
<protein>
    <recommendedName>
        <fullName evidence="3">Heat shock protein hsp-16.2</fullName>
    </recommendedName>
</protein>
<organism>
    <name type="scientific">Caenorhabditis elegans</name>
    <dbReference type="NCBI Taxonomy" id="6239"/>
    <lineage>
        <taxon>Eukaryota</taxon>
        <taxon>Metazoa</taxon>
        <taxon>Ecdysozoa</taxon>
        <taxon>Nematoda</taxon>
        <taxon>Chromadorea</taxon>
        <taxon>Rhabditida</taxon>
        <taxon>Rhabditina</taxon>
        <taxon>Rhabditomorpha</taxon>
        <taxon>Rhabditoidea</taxon>
        <taxon>Rhabditidae</taxon>
        <taxon>Peloderinae</taxon>
        <taxon>Caenorhabditis</taxon>
    </lineage>
</organism>
<sequence>MSLYHYFRPAQRSVFGDLMRDMALMERQFAPVCRISPSESSEIVNNDQKFAINLNVSQFKPEDLKINLDGRTLSIQGEQELKTDHGYSKKSFSRVILLPEDVDVGAVASNLSEDGKLSIEAPKKEAVQGRSIPIQQAIVEEKSAE</sequence>
<name>HSP12_CAEEL</name>
<feature type="chain" id="PRO_0000125959" description="Heat shock protein hsp-16.2">
    <location>
        <begin position="1"/>
        <end position="145"/>
    </location>
</feature>
<feature type="domain" description="sHSP" evidence="1">
    <location>
        <begin position="32"/>
        <end position="137"/>
    </location>
</feature>
<dbReference type="EMBL" id="M14334">
    <property type="protein sequence ID" value="AAA28071.1"/>
    <property type="molecule type" value="Genomic_DNA"/>
</dbReference>
<dbReference type="EMBL" id="BX284605">
    <property type="protein sequence ID" value="CCD70651.1"/>
    <property type="molecule type" value="Genomic_DNA"/>
</dbReference>
<dbReference type="PIR" id="B25199">
    <property type="entry name" value="B25199"/>
</dbReference>
<dbReference type="RefSeq" id="NP_001379929.1">
    <property type="nucleotide sequence ID" value="NM_001392482.1"/>
</dbReference>
<dbReference type="RefSeq" id="NP_503507.1">
    <property type="nucleotide sequence ID" value="NM_071106.7"/>
</dbReference>
<dbReference type="SMR" id="P06582"/>
<dbReference type="BioGRID" id="43724">
    <property type="interactions" value="2"/>
</dbReference>
<dbReference type="FunCoup" id="P06582">
    <property type="interactions" value="81"/>
</dbReference>
<dbReference type="IntAct" id="P06582">
    <property type="interactions" value="1"/>
</dbReference>
<dbReference type="STRING" id="6239.Y46H3A.3a.1"/>
<dbReference type="BindingDB" id="P06582"/>
<dbReference type="ChEMBL" id="CHEMBL2146313"/>
<dbReference type="PaxDb" id="6239-Y46H3A.3"/>
<dbReference type="PeptideAtlas" id="P06582"/>
<dbReference type="EnsemblMetazoa" id="Y46H3A.3a.1">
    <property type="protein sequence ID" value="Y46H3A.3a.1"/>
    <property type="gene ID" value="WBGene00002016"/>
</dbReference>
<dbReference type="GeneID" id="178659"/>
<dbReference type="UCSC" id="Y46H3A.3">
    <property type="organism name" value="c. elegans"/>
</dbReference>
<dbReference type="AGR" id="WB:WBGene00002016"/>
<dbReference type="WormBase" id="Y46H3A.3a">
    <property type="protein sequence ID" value="CE22002"/>
    <property type="gene ID" value="WBGene00002016"/>
    <property type="gene designation" value="hsp-16.2"/>
</dbReference>
<dbReference type="eggNOG" id="KOG3591">
    <property type="taxonomic scope" value="Eukaryota"/>
</dbReference>
<dbReference type="InParanoid" id="P06582"/>
<dbReference type="OMA" id="IGQQMEN"/>
<dbReference type="OrthoDB" id="1431247at2759"/>
<dbReference type="PhylomeDB" id="P06582"/>
<dbReference type="Reactome" id="R-CEL-4420097">
    <property type="pathway name" value="VEGFA-VEGFR2 Pathway"/>
</dbReference>
<dbReference type="PRO" id="PR:P06582"/>
<dbReference type="Proteomes" id="UP000001940">
    <property type="component" value="Chromosome V"/>
</dbReference>
<dbReference type="Bgee" id="WBGene00002016">
    <property type="expression patterns" value="Expressed in pharyngeal muscle cell (C elegans) and 4 other cell types or tissues"/>
</dbReference>
<dbReference type="ExpressionAtlas" id="P06582">
    <property type="expression patterns" value="baseline and differential"/>
</dbReference>
<dbReference type="GO" id="GO:0005737">
    <property type="term" value="C:cytoplasm"/>
    <property type="evidence" value="ECO:0000314"/>
    <property type="project" value="WormBase"/>
</dbReference>
<dbReference type="GO" id="GO:0005634">
    <property type="term" value="C:nucleus"/>
    <property type="evidence" value="ECO:0000318"/>
    <property type="project" value="GO_Central"/>
</dbReference>
<dbReference type="GO" id="GO:0051082">
    <property type="term" value="F:unfolded protein binding"/>
    <property type="evidence" value="ECO:0000250"/>
    <property type="project" value="WormBase"/>
</dbReference>
<dbReference type="GO" id="GO:0042026">
    <property type="term" value="P:protein refolding"/>
    <property type="evidence" value="ECO:0000318"/>
    <property type="project" value="GO_Central"/>
</dbReference>
<dbReference type="GO" id="GO:0009408">
    <property type="term" value="P:response to heat"/>
    <property type="evidence" value="ECO:0000270"/>
    <property type="project" value="UniProtKB"/>
</dbReference>
<dbReference type="CDD" id="cd06526">
    <property type="entry name" value="metazoan_ACD"/>
    <property type="match status" value="1"/>
</dbReference>
<dbReference type="FunFam" id="2.60.40.790:FF:000094">
    <property type="entry name" value="Heat shock protein Hsp-16.2"/>
    <property type="match status" value="1"/>
</dbReference>
<dbReference type="Gene3D" id="2.60.40.790">
    <property type="match status" value="1"/>
</dbReference>
<dbReference type="InterPro" id="IPR002068">
    <property type="entry name" value="A-crystallin/Hsp20_dom"/>
</dbReference>
<dbReference type="InterPro" id="IPR055269">
    <property type="entry name" value="Alpha-crystallin/HSP_16"/>
</dbReference>
<dbReference type="InterPro" id="IPR001436">
    <property type="entry name" value="Alpha-crystallin/sHSP_animal"/>
</dbReference>
<dbReference type="InterPro" id="IPR008978">
    <property type="entry name" value="HSP20-like_chaperone"/>
</dbReference>
<dbReference type="PANTHER" id="PTHR45640">
    <property type="entry name" value="HEAT SHOCK PROTEIN HSP-12.2-RELATED"/>
    <property type="match status" value="1"/>
</dbReference>
<dbReference type="PANTHER" id="PTHR45640:SF1">
    <property type="entry name" value="HEAT SHOCK PROTEIN HSP-16.1_HSP-16.11-RELATED"/>
    <property type="match status" value="1"/>
</dbReference>
<dbReference type="Pfam" id="PF00011">
    <property type="entry name" value="HSP20"/>
    <property type="match status" value="1"/>
</dbReference>
<dbReference type="PIRSF" id="PIRSF036514">
    <property type="entry name" value="Sm_HSP_B1"/>
    <property type="match status" value="1"/>
</dbReference>
<dbReference type="PRINTS" id="PR00299">
    <property type="entry name" value="ACRYSTALLIN"/>
</dbReference>
<dbReference type="SUPFAM" id="SSF49764">
    <property type="entry name" value="HSP20-like chaperones"/>
    <property type="match status" value="1"/>
</dbReference>
<dbReference type="PROSITE" id="PS01031">
    <property type="entry name" value="SHSP"/>
    <property type="match status" value="1"/>
</dbReference>